<name>SDHF2_ASPTN</name>
<protein>
    <recommendedName>
        <fullName evidence="1">Succinate dehydrogenase assembly factor 2, mitochondrial</fullName>
        <shortName evidence="1">SDH assembly factor 2</shortName>
        <shortName evidence="1">SDHAF2</shortName>
    </recommendedName>
</protein>
<sequence length="295" mass="32924">MSVSRMIPRLVRASASPMAVPTAFRRSFGSSVVCAKDNDGPRGPSTPSTAPEYRQNQTSKPPNQFMPNSTSTMTNDYPKVGEKASPPELLNSVDPNYRPADPYSGKVQHFTGGRQEPGAQKPELGLGEMEGITFKVEPLQRSGEDTTTMRARLLYQSRKRGILESDLLLSTFADVYLAKMNHEQLQEYDRFLDENDWDIYYWATQDAPEEGTPAEDTPTETWQRTGAKSGEWRQTIGAFKAAYRPVPTRWADSEVLRLLREHVRDNSATGFHAAKNKKTGGSGLGRMPNIQVFDS</sequence>
<accession>Q0CSY3</accession>
<comment type="function">
    <text evidence="1">Plays an essential role in the assembly of succinate dehydrogenase (SDH), an enzyme complex (also referred to as respiratory complex II) that is a component of both the tricarboxylic acid (TCA) cycle and the mitochondrial electron transport chain, and which couples the oxidation of succinate to fumarate with the reduction of ubiquinone (coenzyme Q) to ubiquinol. Required for flavinylation (covalent attachment of FAD) of the flavoprotein subunit of the SDH catalytic dimer.</text>
</comment>
<comment type="subunit">
    <text evidence="1">Interacts with the flavoprotein subunit within the SDH catalytic dimer.</text>
</comment>
<comment type="subcellular location">
    <subcellularLocation>
        <location evidence="1">Mitochondrion matrix</location>
    </subcellularLocation>
</comment>
<comment type="miscellaneous">
    <text evidence="1">This protein may be expected to contain an N-terminal transit peptide but none has been predicted.</text>
</comment>
<comment type="similarity">
    <text evidence="1">Belongs to the SDHAF2 family.</text>
</comment>
<gene>
    <name type="ORF">ATEG_03201</name>
</gene>
<dbReference type="EMBL" id="CH476597">
    <property type="protein sequence ID" value="EAU36475.1"/>
    <property type="molecule type" value="Genomic_DNA"/>
</dbReference>
<dbReference type="RefSeq" id="XP_001212379.1">
    <property type="nucleotide sequence ID" value="XM_001212379.1"/>
</dbReference>
<dbReference type="SMR" id="Q0CSY3"/>
<dbReference type="STRING" id="341663.Q0CSY3"/>
<dbReference type="EnsemblFungi" id="EAU36475">
    <property type="protein sequence ID" value="EAU36475"/>
    <property type="gene ID" value="ATEG_03201"/>
</dbReference>
<dbReference type="GeneID" id="4317901"/>
<dbReference type="VEuPathDB" id="FungiDB:ATEG_03201"/>
<dbReference type="eggNOG" id="KOG3326">
    <property type="taxonomic scope" value="Eukaryota"/>
</dbReference>
<dbReference type="HOGENOM" id="CLU_943336_0_0_1"/>
<dbReference type="OMA" id="EMEGAKF"/>
<dbReference type="OrthoDB" id="284292at2759"/>
<dbReference type="Proteomes" id="UP000007963">
    <property type="component" value="Unassembled WGS sequence"/>
</dbReference>
<dbReference type="GO" id="GO:0005759">
    <property type="term" value="C:mitochondrial matrix"/>
    <property type="evidence" value="ECO:0000250"/>
    <property type="project" value="UniProtKB"/>
</dbReference>
<dbReference type="GO" id="GO:0006121">
    <property type="term" value="P:mitochondrial electron transport, succinate to ubiquinone"/>
    <property type="evidence" value="ECO:0000250"/>
    <property type="project" value="UniProtKB"/>
</dbReference>
<dbReference type="GO" id="GO:0034553">
    <property type="term" value="P:mitochondrial respiratory chain complex II assembly"/>
    <property type="evidence" value="ECO:0007669"/>
    <property type="project" value="TreeGrafter"/>
</dbReference>
<dbReference type="GO" id="GO:0018293">
    <property type="term" value="P:protein-FAD linkage"/>
    <property type="evidence" value="ECO:0000250"/>
    <property type="project" value="UniProtKB"/>
</dbReference>
<dbReference type="GO" id="GO:0006099">
    <property type="term" value="P:tricarboxylic acid cycle"/>
    <property type="evidence" value="ECO:0007669"/>
    <property type="project" value="TreeGrafter"/>
</dbReference>
<dbReference type="FunFam" id="1.10.150.250:FF:000002">
    <property type="entry name" value="Succinate dehydrogenase assembly factor 2, mitochondrial"/>
    <property type="match status" value="1"/>
</dbReference>
<dbReference type="Gene3D" id="1.10.150.250">
    <property type="entry name" value="Flavinator of succinate dehydrogenase"/>
    <property type="match status" value="1"/>
</dbReference>
<dbReference type="HAMAP" id="MF_03057">
    <property type="entry name" value="SDHAF2"/>
    <property type="match status" value="1"/>
</dbReference>
<dbReference type="InterPro" id="IPR005631">
    <property type="entry name" value="SDH"/>
</dbReference>
<dbReference type="InterPro" id="IPR036714">
    <property type="entry name" value="SDH_sf"/>
</dbReference>
<dbReference type="InterPro" id="IPR028882">
    <property type="entry name" value="SDHAF2"/>
</dbReference>
<dbReference type="PANTHER" id="PTHR12469">
    <property type="entry name" value="PROTEIN EMI5 HOMOLOG, MITOCHONDRIAL"/>
    <property type="match status" value="1"/>
</dbReference>
<dbReference type="PANTHER" id="PTHR12469:SF2">
    <property type="entry name" value="SUCCINATE DEHYDROGENASE ASSEMBLY FACTOR 2, MITOCHONDRIAL"/>
    <property type="match status" value="1"/>
</dbReference>
<dbReference type="Pfam" id="PF03937">
    <property type="entry name" value="Sdh5"/>
    <property type="match status" value="1"/>
</dbReference>
<dbReference type="SUPFAM" id="SSF109910">
    <property type="entry name" value="YgfY-like"/>
    <property type="match status" value="1"/>
</dbReference>
<organism>
    <name type="scientific">Aspergillus terreus (strain NIH 2624 / FGSC A1156)</name>
    <dbReference type="NCBI Taxonomy" id="341663"/>
    <lineage>
        <taxon>Eukaryota</taxon>
        <taxon>Fungi</taxon>
        <taxon>Dikarya</taxon>
        <taxon>Ascomycota</taxon>
        <taxon>Pezizomycotina</taxon>
        <taxon>Eurotiomycetes</taxon>
        <taxon>Eurotiomycetidae</taxon>
        <taxon>Eurotiales</taxon>
        <taxon>Aspergillaceae</taxon>
        <taxon>Aspergillus</taxon>
        <taxon>Aspergillus subgen. Circumdati</taxon>
    </lineage>
</organism>
<evidence type="ECO:0000255" key="1">
    <source>
        <dbReference type="HAMAP-Rule" id="MF_03057"/>
    </source>
</evidence>
<evidence type="ECO:0000256" key="2">
    <source>
        <dbReference type="SAM" id="MobiDB-lite"/>
    </source>
</evidence>
<reference key="1">
    <citation type="submission" date="2005-09" db="EMBL/GenBank/DDBJ databases">
        <title>Annotation of the Aspergillus terreus NIH2624 genome.</title>
        <authorList>
            <person name="Birren B.W."/>
            <person name="Lander E.S."/>
            <person name="Galagan J.E."/>
            <person name="Nusbaum C."/>
            <person name="Devon K."/>
            <person name="Henn M."/>
            <person name="Ma L.-J."/>
            <person name="Jaffe D.B."/>
            <person name="Butler J."/>
            <person name="Alvarez P."/>
            <person name="Gnerre S."/>
            <person name="Grabherr M."/>
            <person name="Kleber M."/>
            <person name="Mauceli E.W."/>
            <person name="Brockman W."/>
            <person name="Rounsley S."/>
            <person name="Young S.K."/>
            <person name="LaButti K."/>
            <person name="Pushparaj V."/>
            <person name="DeCaprio D."/>
            <person name="Crawford M."/>
            <person name="Koehrsen M."/>
            <person name="Engels R."/>
            <person name="Montgomery P."/>
            <person name="Pearson M."/>
            <person name="Howarth C."/>
            <person name="Larson L."/>
            <person name="Luoma S."/>
            <person name="White J."/>
            <person name="Alvarado L."/>
            <person name="Kodira C.D."/>
            <person name="Zeng Q."/>
            <person name="Oleary S."/>
            <person name="Yandava C."/>
            <person name="Denning D.W."/>
            <person name="Nierman W.C."/>
            <person name="Milne T."/>
            <person name="Madden K."/>
        </authorList>
    </citation>
    <scope>NUCLEOTIDE SEQUENCE [LARGE SCALE GENOMIC DNA]</scope>
    <source>
        <strain>NIH 2624 / FGSC A1156</strain>
    </source>
</reference>
<proteinExistence type="inferred from homology"/>
<feature type="chain" id="PRO_0000383188" description="Succinate dehydrogenase assembly factor 2, mitochondrial">
    <location>
        <begin position="1"/>
        <end position="295"/>
    </location>
</feature>
<feature type="region of interest" description="Disordered" evidence="2">
    <location>
        <begin position="35"/>
        <end position="90"/>
    </location>
</feature>
<feature type="region of interest" description="Disordered" evidence="2">
    <location>
        <begin position="208"/>
        <end position="227"/>
    </location>
</feature>
<feature type="region of interest" description="Disordered" evidence="2">
    <location>
        <begin position="269"/>
        <end position="295"/>
    </location>
</feature>
<feature type="compositionally biased region" description="Polar residues" evidence="2">
    <location>
        <begin position="45"/>
        <end position="75"/>
    </location>
</feature>
<keyword id="KW-0143">Chaperone</keyword>
<keyword id="KW-0496">Mitochondrion</keyword>
<keyword id="KW-1185">Reference proteome</keyword>